<sequence length="529" mass="59637">MSTRLEREVARRRTFAIISHPDAGKTTLTEKLLLFGGAIQMAGAVKARKSGRHATSDWMAMERERGISVTTSVMQFPYGDHMVNLLDTPGHQDFSEDTYRVLTAVDSALVVIDVAKGVEAQTRKLMDVCRLRDTPVMTFINKLDRDGLPPLDVMADIEENLRIECVPLTWPIGMGSDFKGTYNLLKRELHLFSASHHGRIQEGILIRDLDDPLLDEHLGPQADALRMDLALLEEAGTPFSREKYLRGEQTPVFFGSAINNFGVRELLDNFVDLAPAPRPRPAITREVSPHEESFTGVVFKIQANMDKAHRDRMAFMRICSGTFTRGMKLRHHRVGKDVTVANATIFLAQDRSGVEEAFPGDIIGIPNHGTIKIGDTFTESKEELKFTGIPSFSPEHFRRVRLRNPLKAKQLQKGLEQLAEEGAVQLFRPQVNNDYILGAVGVLQFDVIISRLHDEYSVEAAYEPCSIHTARWLHCNDRKVFAEFCDYYSAELAIDAEGALAYLAPNPWRLESAMERYPAVEFRTTREIR</sequence>
<accession>A1VA24</accession>
<dbReference type="EMBL" id="CP000527">
    <property type="protein sequence ID" value="ABM27290.1"/>
    <property type="molecule type" value="Genomic_DNA"/>
</dbReference>
<dbReference type="RefSeq" id="WP_010940375.1">
    <property type="nucleotide sequence ID" value="NC_008751.1"/>
</dbReference>
<dbReference type="SMR" id="A1VA24"/>
<dbReference type="KEGG" id="dvl:Dvul_0266"/>
<dbReference type="HOGENOM" id="CLU_002794_2_1_7"/>
<dbReference type="Proteomes" id="UP000009173">
    <property type="component" value="Chromosome"/>
</dbReference>
<dbReference type="GO" id="GO:0005829">
    <property type="term" value="C:cytosol"/>
    <property type="evidence" value="ECO:0007669"/>
    <property type="project" value="TreeGrafter"/>
</dbReference>
<dbReference type="GO" id="GO:0005525">
    <property type="term" value="F:GTP binding"/>
    <property type="evidence" value="ECO:0007669"/>
    <property type="project" value="UniProtKB-UniRule"/>
</dbReference>
<dbReference type="GO" id="GO:0003924">
    <property type="term" value="F:GTPase activity"/>
    <property type="evidence" value="ECO:0007669"/>
    <property type="project" value="InterPro"/>
</dbReference>
<dbReference type="GO" id="GO:0016150">
    <property type="term" value="F:translation release factor activity, codon nonspecific"/>
    <property type="evidence" value="ECO:0007669"/>
    <property type="project" value="TreeGrafter"/>
</dbReference>
<dbReference type="GO" id="GO:0016149">
    <property type="term" value="F:translation release factor activity, codon specific"/>
    <property type="evidence" value="ECO:0007669"/>
    <property type="project" value="UniProtKB-UniRule"/>
</dbReference>
<dbReference type="GO" id="GO:0006449">
    <property type="term" value="P:regulation of translational termination"/>
    <property type="evidence" value="ECO:0007669"/>
    <property type="project" value="UniProtKB-UniRule"/>
</dbReference>
<dbReference type="CDD" id="cd04169">
    <property type="entry name" value="RF3"/>
    <property type="match status" value="1"/>
</dbReference>
<dbReference type="CDD" id="cd03689">
    <property type="entry name" value="RF3_II"/>
    <property type="match status" value="1"/>
</dbReference>
<dbReference type="CDD" id="cd16259">
    <property type="entry name" value="RF3_III"/>
    <property type="match status" value="1"/>
</dbReference>
<dbReference type="FunFam" id="3.30.70.3280:FF:000001">
    <property type="entry name" value="Peptide chain release factor 3"/>
    <property type="match status" value="1"/>
</dbReference>
<dbReference type="FunFam" id="3.40.50.300:FF:000542">
    <property type="entry name" value="Peptide chain release factor 3"/>
    <property type="match status" value="1"/>
</dbReference>
<dbReference type="Gene3D" id="3.40.50.300">
    <property type="entry name" value="P-loop containing nucleotide triphosphate hydrolases"/>
    <property type="match status" value="3"/>
</dbReference>
<dbReference type="Gene3D" id="3.30.70.3280">
    <property type="entry name" value="Peptide chain release factor 3, domain III"/>
    <property type="match status" value="1"/>
</dbReference>
<dbReference type="HAMAP" id="MF_00072">
    <property type="entry name" value="Rel_fac_3"/>
    <property type="match status" value="1"/>
</dbReference>
<dbReference type="InterPro" id="IPR053905">
    <property type="entry name" value="EF-G-like_DII"/>
</dbReference>
<dbReference type="InterPro" id="IPR035647">
    <property type="entry name" value="EFG_III/V"/>
</dbReference>
<dbReference type="InterPro" id="IPR031157">
    <property type="entry name" value="G_TR_CS"/>
</dbReference>
<dbReference type="InterPro" id="IPR027417">
    <property type="entry name" value="P-loop_NTPase"/>
</dbReference>
<dbReference type="InterPro" id="IPR004548">
    <property type="entry name" value="PrfC"/>
</dbReference>
<dbReference type="InterPro" id="IPR032090">
    <property type="entry name" value="RF3_C"/>
</dbReference>
<dbReference type="InterPro" id="IPR038467">
    <property type="entry name" value="RF3_dom_3_sf"/>
</dbReference>
<dbReference type="InterPro" id="IPR041732">
    <property type="entry name" value="RF3_GTP-bd"/>
</dbReference>
<dbReference type="InterPro" id="IPR005225">
    <property type="entry name" value="Small_GTP-bd"/>
</dbReference>
<dbReference type="InterPro" id="IPR000795">
    <property type="entry name" value="T_Tr_GTP-bd_dom"/>
</dbReference>
<dbReference type="InterPro" id="IPR009000">
    <property type="entry name" value="Transl_B-barrel_sf"/>
</dbReference>
<dbReference type="NCBIfam" id="TIGR00503">
    <property type="entry name" value="prfC"/>
    <property type="match status" value="1"/>
</dbReference>
<dbReference type="NCBIfam" id="NF001964">
    <property type="entry name" value="PRK00741.1"/>
    <property type="match status" value="1"/>
</dbReference>
<dbReference type="NCBIfam" id="TIGR00231">
    <property type="entry name" value="small_GTP"/>
    <property type="match status" value="1"/>
</dbReference>
<dbReference type="PANTHER" id="PTHR43556">
    <property type="entry name" value="PEPTIDE CHAIN RELEASE FACTOR RF3"/>
    <property type="match status" value="1"/>
</dbReference>
<dbReference type="PANTHER" id="PTHR43556:SF2">
    <property type="entry name" value="PEPTIDE CHAIN RELEASE FACTOR RF3"/>
    <property type="match status" value="1"/>
</dbReference>
<dbReference type="Pfam" id="PF22042">
    <property type="entry name" value="EF-G_D2"/>
    <property type="match status" value="1"/>
</dbReference>
<dbReference type="Pfam" id="PF00009">
    <property type="entry name" value="GTP_EFTU"/>
    <property type="match status" value="1"/>
</dbReference>
<dbReference type="Pfam" id="PF16658">
    <property type="entry name" value="RF3_C"/>
    <property type="match status" value="1"/>
</dbReference>
<dbReference type="PRINTS" id="PR00315">
    <property type="entry name" value="ELONGATNFCT"/>
</dbReference>
<dbReference type="SUPFAM" id="SSF54980">
    <property type="entry name" value="EF-G C-terminal domain-like"/>
    <property type="match status" value="1"/>
</dbReference>
<dbReference type="SUPFAM" id="SSF52540">
    <property type="entry name" value="P-loop containing nucleoside triphosphate hydrolases"/>
    <property type="match status" value="1"/>
</dbReference>
<dbReference type="SUPFAM" id="SSF50447">
    <property type="entry name" value="Translation proteins"/>
    <property type="match status" value="1"/>
</dbReference>
<dbReference type="PROSITE" id="PS00301">
    <property type="entry name" value="G_TR_1"/>
    <property type="match status" value="1"/>
</dbReference>
<dbReference type="PROSITE" id="PS51722">
    <property type="entry name" value="G_TR_2"/>
    <property type="match status" value="1"/>
</dbReference>
<evidence type="ECO:0000255" key="1">
    <source>
        <dbReference type="HAMAP-Rule" id="MF_00072"/>
    </source>
</evidence>
<gene>
    <name evidence="1" type="primary">prfC</name>
    <name type="ordered locus">Dvul_0266</name>
</gene>
<name>RF3_NITV4</name>
<organism>
    <name type="scientific">Nitratidesulfovibrio vulgaris (strain DP4)</name>
    <name type="common">Desulfovibrio vulgaris</name>
    <dbReference type="NCBI Taxonomy" id="391774"/>
    <lineage>
        <taxon>Bacteria</taxon>
        <taxon>Pseudomonadati</taxon>
        <taxon>Thermodesulfobacteriota</taxon>
        <taxon>Desulfovibrionia</taxon>
        <taxon>Desulfovibrionales</taxon>
        <taxon>Desulfovibrionaceae</taxon>
        <taxon>Nitratidesulfovibrio</taxon>
    </lineage>
</organism>
<reference key="1">
    <citation type="journal article" date="2009" name="Environ. Microbiol.">
        <title>Contribution of mobile genetic elements to Desulfovibrio vulgaris genome plasticity.</title>
        <authorList>
            <person name="Walker C.B."/>
            <person name="Stolyar S."/>
            <person name="Chivian D."/>
            <person name="Pinel N."/>
            <person name="Gabster J.A."/>
            <person name="Dehal P.S."/>
            <person name="He Z."/>
            <person name="Yang Z.K."/>
            <person name="Yen H.C."/>
            <person name="Zhou J."/>
            <person name="Wall J.D."/>
            <person name="Hazen T.C."/>
            <person name="Arkin A.P."/>
            <person name="Stahl D.A."/>
        </authorList>
    </citation>
    <scope>NUCLEOTIDE SEQUENCE [LARGE SCALE GENOMIC DNA]</scope>
    <source>
        <strain>DP4</strain>
    </source>
</reference>
<keyword id="KW-0963">Cytoplasm</keyword>
<keyword id="KW-0342">GTP-binding</keyword>
<keyword id="KW-0547">Nucleotide-binding</keyword>
<keyword id="KW-0648">Protein biosynthesis</keyword>
<feature type="chain" id="PRO_1000023642" description="Peptide chain release factor 3">
    <location>
        <begin position="1"/>
        <end position="529"/>
    </location>
</feature>
<feature type="domain" description="tr-type G">
    <location>
        <begin position="10"/>
        <end position="278"/>
    </location>
</feature>
<feature type="binding site" evidence="1">
    <location>
        <begin position="19"/>
        <end position="26"/>
    </location>
    <ligand>
        <name>GTP</name>
        <dbReference type="ChEBI" id="CHEBI:37565"/>
    </ligand>
</feature>
<feature type="binding site" evidence="1">
    <location>
        <begin position="87"/>
        <end position="91"/>
    </location>
    <ligand>
        <name>GTP</name>
        <dbReference type="ChEBI" id="CHEBI:37565"/>
    </ligand>
</feature>
<feature type="binding site" evidence="1">
    <location>
        <begin position="141"/>
        <end position="144"/>
    </location>
    <ligand>
        <name>GTP</name>
        <dbReference type="ChEBI" id="CHEBI:37565"/>
    </ligand>
</feature>
<protein>
    <recommendedName>
        <fullName evidence="1">Peptide chain release factor 3</fullName>
        <shortName evidence="1">RF-3</shortName>
    </recommendedName>
</protein>
<proteinExistence type="inferred from homology"/>
<comment type="function">
    <text evidence="1">Increases the formation of ribosomal termination complexes and stimulates activities of RF-1 and RF-2. It binds guanine nucleotides and has strong preference for UGA stop codons. It may interact directly with the ribosome. The stimulation of RF-1 and RF-2 is significantly reduced by GTP and GDP, but not by GMP.</text>
</comment>
<comment type="subcellular location">
    <subcellularLocation>
        <location evidence="1">Cytoplasm</location>
    </subcellularLocation>
</comment>
<comment type="similarity">
    <text evidence="1">Belongs to the TRAFAC class translation factor GTPase superfamily. Classic translation factor GTPase family. PrfC subfamily.</text>
</comment>